<evidence type="ECO:0000269" key="1">
    <source>
    </source>
</evidence>
<evidence type="ECO:0000269" key="2">
    <source>
    </source>
</evidence>
<evidence type="ECO:0000269" key="3">
    <source>
    </source>
</evidence>
<evidence type="ECO:0000269" key="4">
    <source>
    </source>
</evidence>
<evidence type="ECO:0000305" key="5"/>
<evidence type="ECO:0007829" key="6">
    <source>
        <dbReference type="PDB" id="1SF8"/>
    </source>
</evidence>
<evidence type="ECO:0007829" key="7">
    <source>
        <dbReference type="PDB" id="1Y4S"/>
    </source>
</evidence>
<evidence type="ECO:0007829" key="8">
    <source>
        <dbReference type="PDB" id="1Y4U"/>
    </source>
</evidence>
<evidence type="ECO:0007829" key="9">
    <source>
        <dbReference type="PDB" id="2GQ0"/>
    </source>
</evidence>
<evidence type="ECO:0007829" key="10">
    <source>
        <dbReference type="PDB" id="2IOR"/>
    </source>
</evidence>
<name>HTPG_ECOLI</name>
<gene>
    <name type="primary">htpG</name>
    <name type="ordered locus">b0473</name>
    <name type="ordered locus">JW0462</name>
</gene>
<reference key="1">
    <citation type="journal article" date="1987" name="Proc. Natl. Acad. Sci. U.S.A.">
        <title>Eukaryotic Mr 83,000 heat shock protein has a homologue in Escherichia coli.</title>
        <authorList>
            <person name="Bardwell J.C.A."/>
            <person name="Craig E.A."/>
        </authorList>
    </citation>
    <scope>NUCLEOTIDE SEQUENCE [GENOMIC DNA]</scope>
</reference>
<reference key="2">
    <citation type="submission" date="1997-01" db="EMBL/GenBank/DDBJ databases">
        <title>Sequence of minutes 4-25 of Escherichia coli.</title>
        <authorList>
            <person name="Chung E."/>
            <person name="Allen E."/>
            <person name="Araujo R."/>
            <person name="Aparicio A.M."/>
            <person name="Davis K."/>
            <person name="Duncan M."/>
            <person name="Federspiel N."/>
            <person name="Hyman R."/>
            <person name="Kalman S."/>
            <person name="Komp C."/>
            <person name="Kurdi O."/>
            <person name="Lew H."/>
            <person name="Lin D."/>
            <person name="Namath A."/>
            <person name="Oefner P."/>
            <person name="Roberts D."/>
            <person name="Schramm S."/>
            <person name="Davis R.W."/>
        </authorList>
    </citation>
    <scope>NUCLEOTIDE SEQUENCE [LARGE SCALE GENOMIC DNA]</scope>
    <source>
        <strain>K12 / MG1655 / ATCC 47076</strain>
    </source>
</reference>
<reference key="3">
    <citation type="journal article" date="1997" name="Science">
        <title>The complete genome sequence of Escherichia coli K-12.</title>
        <authorList>
            <person name="Blattner F.R."/>
            <person name="Plunkett G. III"/>
            <person name="Bloch C.A."/>
            <person name="Perna N.T."/>
            <person name="Burland V."/>
            <person name="Riley M."/>
            <person name="Collado-Vides J."/>
            <person name="Glasner J.D."/>
            <person name="Rode C.K."/>
            <person name="Mayhew G.F."/>
            <person name="Gregor J."/>
            <person name="Davis N.W."/>
            <person name="Kirkpatrick H.A."/>
            <person name="Goeden M.A."/>
            <person name="Rose D.J."/>
            <person name="Mau B."/>
            <person name="Shao Y."/>
        </authorList>
    </citation>
    <scope>NUCLEOTIDE SEQUENCE [LARGE SCALE GENOMIC DNA]</scope>
    <source>
        <strain>K12 / MG1655 / ATCC 47076</strain>
    </source>
</reference>
<reference key="4">
    <citation type="journal article" date="2006" name="Mol. Syst. Biol.">
        <title>Highly accurate genome sequences of Escherichia coli K-12 strains MG1655 and W3110.</title>
        <authorList>
            <person name="Hayashi K."/>
            <person name="Morooka N."/>
            <person name="Yamamoto Y."/>
            <person name="Fujita K."/>
            <person name="Isono K."/>
            <person name="Choi S."/>
            <person name="Ohtsubo E."/>
            <person name="Baba T."/>
            <person name="Wanner B.L."/>
            <person name="Mori H."/>
            <person name="Horiuchi T."/>
        </authorList>
    </citation>
    <scope>NUCLEOTIDE SEQUENCE [LARGE SCALE GENOMIC DNA]</scope>
    <source>
        <strain>K12 / W3110 / ATCC 27325 / DSM 5911</strain>
    </source>
</reference>
<reference key="5">
    <citation type="journal article" date="1997" name="Electrophoresis">
        <title>Comparing the predicted and observed properties of proteins encoded in the genome of Escherichia coli K-12.</title>
        <authorList>
            <person name="Link A.J."/>
            <person name="Robison K."/>
            <person name="Church G.M."/>
        </authorList>
    </citation>
    <scope>PROTEIN SEQUENCE OF 1-11</scope>
    <source>
        <strain>K12 / EMG2</strain>
    </source>
</reference>
<reference key="6">
    <citation type="journal article" date="1989" name="J. Biol. Chem.">
        <title>Purification and properties of the Escherichia coli heat shock protein, HtpG.</title>
        <authorList>
            <person name="Spence J."/>
            <person name="Georgopoulos C."/>
        </authorList>
    </citation>
    <scope>PROTEIN SEQUENCE OF 1-8</scope>
    <scope>SUBUNIT</scope>
    <scope>PHOSPHORYLATION</scope>
</reference>
<reference key="7">
    <citation type="journal article" date="1993" name="J. Biol. Chem.">
        <title>Hsp90 chaperonins possess ATPase activity and bind heat shock transcription factors and peptidyl prolyl isomerases.</title>
        <authorList>
            <person name="Nadeau K."/>
            <person name="Das A."/>
            <person name="Walsh C.T."/>
        </authorList>
    </citation>
    <scope>ATPASE ACTIVITY</scope>
</reference>
<reference key="8">
    <citation type="journal article" date="1997" name="Electrophoresis">
        <title>Escherichia coli proteome analysis using the gene-protein database.</title>
        <authorList>
            <person name="VanBogelen R.A."/>
            <person name="Abshire K.Z."/>
            <person name="Moldover B."/>
            <person name="Olson E.R."/>
            <person name="Neidhardt F.C."/>
        </authorList>
    </citation>
    <scope>IDENTIFICATION BY 2D-GEL</scope>
</reference>
<reference key="9">
    <citation type="journal article" date="2001" name="Eur. J. Biochem.">
        <title>Domain-domain interactions of HtpG, an Escherichia coli homologue of eukaryotic HSP90 molecular chaperone.</title>
        <authorList>
            <person name="Nemoto T.K."/>
            <person name="Ono T."/>
            <person name="Kobayakawa T."/>
            <person name="Tanaka E."/>
            <person name="Baba T.T."/>
            <person name="Tanaka K."/>
            <person name="Takagi T."/>
            <person name="Gotoh T."/>
        </authorList>
    </citation>
    <scope>DOMAIN STRUCTURE</scope>
</reference>
<reference key="10">
    <citation type="journal article" date="2001" name="Biochem. J.">
        <title>Substrate-binding characteristics of proteins in the 90 kDa heat shock protein family.</title>
        <authorList>
            <person name="Nemoto T.K."/>
            <person name="Ono T."/>
            <person name="Tanaka K."/>
        </authorList>
    </citation>
    <scope>DOMAIN STRUCTURE</scope>
</reference>
<reference key="11">
    <citation type="journal article" date="2005" name="J. Biol. Chem.">
        <title>Protein complexes of the Escherichia coli cell envelope.</title>
        <authorList>
            <person name="Stenberg F."/>
            <person name="Chovanec P."/>
            <person name="Maslen S.L."/>
            <person name="Robinson C.V."/>
            <person name="Ilag L."/>
            <person name="von Heijne G."/>
            <person name="Daley D.O."/>
        </authorList>
    </citation>
    <scope>SUBCELLULAR LOCATION</scope>
    <source>
        <strain>BL21-DE3</strain>
    </source>
</reference>
<reference key="12">
    <citation type="journal article" date="2004" name="Structure">
        <title>The crystal structure of the carboxy-terminal dimerization domain of htpG, the Escherichia coli Hsp90, reveals a potential substrate binding site.</title>
        <authorList>
            <person name="Harris S.F."/>
            <person name="Shiau A.K."/>
            <person name="Agard D.A."/>
        </authorList>
    </citation>
    <scope>X-RAY CRYSTALLOGRAPHY (2.60 ANGSTROMS) OF 511-624</scope>
    <scope>HOMODIMERIZATION</scope>
</reference>
<reference key="13">
    <citation type="journal article" date="2005" name="Structure">
        <title>Structures of the N-terminal and middle domains of E. coli Hsp90 and conformation changes upon ADP binding.</title>
        <authorList>
            <person name="Huai Q."/>
            <person name="Wang H."/>
            <person name="Liu Y."/>
            <person name="Kim H.Y."/>
            <person name="Toft D."/>
            <person name="Ke H."/>
        </authorList>
    </citation>
    <scope>X-RAY CRYSTALLOGRAPHY (2.90 ANGSTROMS) OF 1-559 IN COMPLEX WITH ATP</scope>
    <scope>CATALYTIC ACTIVITY</scope>
</reference>
<reference key="14">
    <citation type="journal article" date="2006" name="Cell">
        <title>Structural Analysis of E. coli hsp90 reveals dramatic nucleotide-dependent conformational rearrangements.</title>
        <authorList>
            <person name="Shiau A.K."/>
            <person name="Harris S.F."/>
            <person name="Southworth D.R."/>
            <person name="Agard D.A."/>
        </authorList>
    </citation>
    <scope>X-RAY CRYSTALLOGRAPHY (1.65 ANGSTROMS) IN COMPLEX WITH ADP</scope>
</reference>
<organism>
    <name type="scientific">Escherichia coli (strain K12)</name>
    <dbReference type="NCBI Taxonomy" id="83333"/>
    <lineage>
        <taxon>Bacteria</taxon>
        <taxon>Pseudomonadati</taxon>
        <taxon>Pseudomonadota</taxon>
        <taxon>Gammaproteobacteria</taxon>
        <taxon>Enterobacterales</taxon>
        <taxon>Enterobacteriaceae</taxon>
        <taxon>Escherichia</taxon>
    </lineage>
</organism>
<protein>
    <recommendedName>
        <fullName>Chaperone protein HtpG</fullName>
    </recommendedName>
    <alternativeName>
        <fullName>Heat shock protein C62.5</fullName>
    </alternativeName>
    <alternativeName>
        <fullName>Heat shock protein HtpG</fullName>
    </alternativeName>
    <alternativeName>
        <fullName>High temperature protein G</fullName>
    </alternativeName>
</protein>
<comment type="function">
    <text>Molecular chaperone. Has ATPase activity.</text>
</comment>
<comment type="subunit">
    <text evidence="1 3 4">Homodimer. Oligomerizes at 65 degrees Celsius.</text>
</comment>
<comment type="interaction">
    <interactant intactId="EBI-369221">
        <id>P0A6Z3</id>
    </interactant>
    <interactant intactId="EBI-552525">
        <id>P76236</id>
        <label>cdgI</label>
    </interactant>
    <organismsDiffer>false</organismsDiffer>
    <experiments>3</experiments>
</comment>
<comment type="interaction">
    <interactant intactId="EBI-369221">
        <id>P0A6Z3</id>
    </interactant>
    <interactant intactId="EBI-542092">
        <id>P0A6Y8</id>
        <label>dnaK</label>
    </interactant>
    <organismsDiffer>false</organismsDiffer>
    <experiments>3</experiments>
</comment>
<comment type="interaction">
    <interactant intactId="EBI-369221">
        <id>P0A6Z3</id>
    </interactant>
    <interactant intactId="EBI-369221">
        <id>P0A6Z3</id>
        <label>htpG</label>
    </interactant>
    <organismsDiffer>false</organismsDiffer>
    <experiments>6</experiments>
</comment>
<comment type="interaction">
    <interactant intactId="EBI-369221">
        <id>P0A6Z3</id>
    </interactant>
    <interactant intactId="EBI-543604">
        <id>P0A8T7</id>
        <label>rpoC</label>
    </interactant>
    <organismsDiffer>false</organismsDiffer>
    <experiments>3</experiments>
</comment>
<comment type="interaction">
    <interactant intactId="EBI-369221">
        <id>P0A6Z3</id>
    </interactant>
    <interactant intactId="EBI-552519">
        <id>P75862</id>
        <label>zapC</label>
    </interactant>
    <organismsDiffer>false</organismsDiffer>
    <experiments>3</experiments>
</comment>
<comment type="subcellular location">
    <subcellularLocation>
        <location evidence="2">Cytoplasm</location>
    </subcellularLocation>
    <subcellularLocation>
        <location evidence="2">Cell inner membrane</location>
        <topology evidence="2">Peripheral membrane protein</topology>
    </subcellularLocation>
</comment>
<comment type="PTM">
    <text evidence="4">Phosphorylated.</text>
</comment>
<comment type="similarity">
    <text evidence="5">Belongs to the heat shock protein 90 family.</text>
</comment>
<feature type="chain" id="PRO_0000062985" description="Chaperone protein HtpG">
    <location>
        <begin position="1"/>
        <end position="624"/>
    </location>
</feature>
<feature type="region of interest" description="A; substrate-binding">
    <location>
        <begin position="1"/>
        <end position="336"/>
    </location>
</feature>
<feature type="region of interest" description="B">
    <location>
        <begin position="337"/>
        <end position="552"/>
    </location>
</feature>
<feature type="region of interest" description="C">
    <location>
        <begin position="553"/>
        <end position="624"/>
    </location>
</feature>
<feature type="region of interest" description="Mediates dimerization">
    <location>
        <begin position="585"/>
        <end position="624"/>
    </location>
</feature>
<feature type="binding site" evidence="1">
    <location>
        <position position="38"/>
    </location>
    <ligand>
        <name>ATP</name>
        <dbReference type="ChEBI" id="CHEBI:30616"/>
    </ligand>
</feature>
<feature type="binding site" evidence="1">
    <location>
        <position position="80"/>
    </location>
    <ligand>
        <name>ATP</name>
        <dbReference type="ChEBI" id="CHEBI:30616"/>
    </ligand>
</feature>
<feature type="binding site" evidence="1">
    <location>
        <position position="127"/>
    </location>
    <ligand>
        <name>ATP</name>
        <dbReference type="ChEBI" id="CHEBI:30616"/>
    </ligand>
</feature>
<feature type="binding site" evidence="1">
    <location>
        <position position="174"/>
    </location>
    <ligand>
        <name>ATP</name>
        <dbReference type="ChEBI" id="CHEBI:30616"/>
    </ligand>
</feature>
<feature type="binding site" evidence="1">
    <location>
        <position position="255"/>
    </location>
    <ligand>
        <name>ATP</name>
        <dbReference type="ChEBI" id="CHEBI:30616"/>
    </ligand>
</feature>
<feature type="strand" evidence="10">
    <location>
        <begin position="2"/>
        <end position="8"/>
    </location>
</feature>
<feature type="helix" evidence="10">
    <location>
        <begin position="11"/>
        <end position="23"/>
    </location>
</feature>
<feature type="helix" evidence="10">
    <location>
        <begin position="25"/>
        <end position="29"/>
    </location>
</feature>
<feature type="helix" evidence="10">
    <location>
        <begin position="30"/>
        <end position="50"/>
    </location>
</feature>
<feature type="helix" evidence="10">
    <location>
        <begin position="54"/>
        <end position="57"/>
    </location>
</feature>
<feature type="strand" evidence="10">
    <location>
        <begin position="65"/>
        <end position="70"/>
    </location>
</feature>
<feature type="turn" evidence="10">
    <location>
        <begin position="71"/>
        <end position="74"/>
    </location>
</feature>
<feature type="strand" evidence="10">
    <location>
        <begin position="75"/>
        <end position="80"/>
    </location>
</feature>
<feature type="helix" evidence="10">
    <location>
        <begin position="87"/>
        <end position="94"/>
    </location>
</feature>
<feature type="helix" evidence="10">
    <location>
        <begin position="102"/>
        <end position="108"/>
    </location>
</feature>
<feature type="helix" evidence="10">
    <location>
        <begin position="113"/>
        <end position="120"/>
    </location>
</feature>
<feature type="helix" evidence="10">
    <location>
        <begin position="127"/>
        <end position="132"/>
    </location>
</feature>
<feature type="strand" evidence="10">
    <location>
        <begin position="134"/>
        <end position="142"/>
    </location>
</feature>
<feature type="strand" evidence="7">
    <location>
        <begin position="144"/>
        <end position="146"/>
    </location>
</feature>
<feature type="helix" evidence="10">
    <location>
        <begin position="148"/>
        <end position="150"/>
    </location>
</feature>
<feature type="strand" evidence="10">
    <location>
        <begin position="151"/>
        <end position="156"/>
    </location>
</feature>
<feature type="strand" evidence="10">
    <location>
        <begin position="158"/>
        <end position="167"/>
    </location>
</feature>
<feature type="strand" evidence="10">
    <location>
        <begin position="173"/>
        <end position="180"/>
    </location>
</feature>
<feature type="helix" evidence="10">
    <location>
        <begin position="185"/>
        <end position="188"/>
    </location>
</feature>
<feature type="helix" evidence="10">
    <location>
        <begin position="190"/>
        <end position="200"/>
    </location>
</feature>
<feature type="strand" evidence="10">
    <location>
        <begin position="208"/>
        <end position="210"/>
    </location>
</feature>
<feature type="strand" evidence="7">
    <location>
        <begin position="221"/>
        <end position="226"/>
    </location>
</feature>
<feature type="helix" evidence="9">
    <location>
        <begin position="233"/>
        <end position="235"/>
    </location>
</feature>
<feature type="helix" evidence="9">
    <location>
        <begin position="238"/>
        <end position="240"/>
    </location>
</feature>
<feature type="helix" evidence="9">
    <location>
        <begin position="243"/>
        <end position="254"/>
    </location>
</feature>
<feature type="strand" evidence="9">
    <location>
        <begin position="261"/>
        <end position="268"/>
    </location>
</feature>
<feature type="strand" evidence="9">
    <location>
        <begin position="270"/>
        <end position="272"/>
    </location>
</feature>
<feature type="strand" evidence="9">
    <location>
        <begin position="274"/>
        <end position="280"/>
    </location>
</feature>
<feature type="turn" evidence="9">
    <location>
        <begin position="286"/>
        <end position="289"/>
    </location>
</feature>
<feature type="strand" evidence="9">
    <location>
        <begin position="296"/>
        <end position="301"/>
    </location>
</feature>
<feature type="strand" evidence="9">
    <location>
        <begin position="304"/>
        <end position="310"/>
    </location>
</feature>
<feature type="helix" evidence="9">
    <location>
        <begin position="311"/>
        <end position="313"/>
    </location>
</feature>
<feature type="helix" evidence="9">
    <location>
        <begin position="316"/>
        <end position="318"/>
    </location>
</feature>
<feature type="strand" evidence="9">
    <location>
        <begin position="322"/>
        <end position="330"/>
    </location>
</feature>
<feature type="helix" evidence="9">
    <location>
        <begin position="336"/>
        <end position="341"/>
    </location>
</feature>
<feature type="helix" evidence="9">
    <location>
        <begin position="343"/>
        <end position="366"/>
    </location>
</feature>
<feature type="helix" evidence="9">
    <location>
        <begin position="368"/>
        <end position="382"/>
    </location>
</feature>
<feature type="helix" evidence="9">
    <location>
        <begin position="385"/>
        <end position="388"/>
    </location>
</feature>
<feature type="helix" evidence="9">
    <location>
        <begin position="390"/>
        <end position="392"/>
    </location>
</feature>
<feature type="helix" evidence="9">
    <location>
        <begin position="393"/>
        <end position="397"/>
    </location>
</feature>
<feature type="strand" evidence="9">
    <location>
        <begin position="402"/>
        <end position="404"/>
    </location>
</feature>
<feature type="turn" evidence="9">
    <location>
        <begin position="405"/>
        <end position="408"/>
    </location>
</feature>
<feature type="helix" evidence="9">
    <location>
        <begin position="416"/>
        <end position="421"/>
    </location>
</feature>
<feature type="strand" evidence="9">
    <location>
        <begin position="429"/>
        <end position="434"/>
    </location>
</feature>
<feature type="helix" evidence="9">
    <location>
        <begin position="438"/>
        <end position="442"/>
    </location>
</feature>
<feature type="helix" evidence="9">
    <location>
        <begin position="445"/>
        <end position="447"/>
    </location>
</feature>
<feature type="helix" evidence="9">
    <location>
        <begin position="448"/>
        <end position="453"/>
    </location>
</feature>
<feature type="strand" evidence="9">
    <location>
        <begin position="457"/>
        <end position="460"/>
    </location>
</feature>
<feature type="helix" evidence="9">
    <location>
        <begin position="465"/>
        <end position="468"/>
    </location>
</feature>
<feature type="turn" evidence="9">
    <location>
        <begin position="469"/>
        <end position="471"/>
    </location>
</feature>
<feature type="strand" evidence="8">
    <location>
        <begin position="474"/>
        <end position="477"/>
    </location>
</feature>
<feature type="strand" evidence="9">
    <location>
        <begin position="478"/>
        <end position="482"/>
    </location>
</feature>
<feature type="helix" evidence="9">
    <location>
        <begin position="488"/>
        <end position="493"/>
    </location>
</feature>
<feature type="helix" evidence="6">
    <location>
        <begin position="511"/>
        <end position="519"/>
    </location>
</feature>
<feature type="helix" evidence="6">
    <location>
        <begin position="520"/>
        <end position="522"/>
    </location>
</feature>
<feature type="strand" evidence="6">
    <location>
        <begin position="523"/>
        <end position="528"/>
    </location>
</feature>
<feature type="strand" evidence="6">
    <location>
        <begin position="537"/>
        <end position="540"/>
    </location>
</feature>
<feature type="helix" evidence="6">
    <location>
        <begin position="548"/>
        <end position="555"/>
    </location>
</feature>
<feature type="turn" evidence="6">
    <location>
        <begin position="556"/>
        <end position="558"/>
    </location>
</feature>
<feature type="strand" evidence="6">
    <location>
        <begin position="567"/>
        <end position="570"/>
    </location>
</feature>
<feature type="helix" evidence="6">
    <location>
        <begin position="575"/>
        <end position="582"/>
    </location>
</feature>
<feature type="helix" evidence="6">
    <location>
        <begin position="586"/>
        <end position="605"/>
    </location>
</feature>
<feature type="helix" evidence="6">
    <location>
        <begin position="611"/>
        <end position="623"/>
    </location>
</feature>
<accession>P0A6Z3</accession>
<accession>P10413</accession>
<accession>Q2MBV4</accession>
<dbReference type="EMBL" id="M38777">
    <property type="protein sequence ID" value="AAA23460.1"/>
    <property type="molecule type" value="Genomic_DNA"/>
</dbReference>
<dbReference type="EMBL" id="U82664">
    <property type="protein sequence ID" value="AAB40227.1"/>
    <property type="molecule type" value="Genomic_DNA"/>
</dbReference>
<dbReference type="EMBL" id="U00096">
    <property type="protein sequence ID" value="AAC73575.1"/>
    <property type="molecule type" value="Genomic_DNA"/>
</dbReference>
<dbReference type="EMBL" id="AP009048">
    <property type="protein sequence ID" value="BAE76252.1"/>
    <property type="molecule type" value="Genomic_DNA"/>
</dbReference>
<dbReference type="PIR" id="A28324">
    <property type="entry name" value="HHEC62"/>
</dbReference>
<dbReference type="RefSeq" id="NP_415006.1">
    <property type="nucleotide sequence ID" value="NC_000913.3"/>
</dbReference>
<dbReference type="RefSeq" id="WP_000678201.1">
    <property type="nucleotide sequence ID" value="NZ_SSZK01000009.1"/>
</dbReference>
<dbReference type="PDB" id="1SF8">
    <property type="method" value="X-ray"/>
    <property type="resolution" value="2.60 A"/>
    <property type="chains" value="A/B/C/D/E/F/G/H=511-624"/>
</dbReference>
<dbReference type="PDB" id="1Y4S">
    <property type="method" value="X-ray"/>
    <property type="resolution" value="2.90 A"/>
    <property type="chains" value="A/B=1-559"/>
</dbReference>
<dbReference type="PDB" id="1Y4U">
    <property type="method" value="X-ray"/>
    <property type="resolution" value="2.90 A"/>
    <property type="chains" value="A/B=1-559"/>
</dbReference>
<dbReference type="PDB" id="2GQ0">
    <property type="method" value="X-ray"/>
    <property type="resolution" value="1.90 A"/>
    <property type="chains" value="A/B=230-495"/>
</dbReference>
<dbReference type="PDB" id="2IOP">
    <property type="method" value="X-ray"/>
    <property type="resolution" value="3.55 A"/>
    <property type="chains" value="A/B/C/D=1-624"/>
</dbReference>
<dbReference type="PDB" id="2IOQ">
    <property type="method" value="X-ray"/>
    <property type="resolution" value="3.50 A"/>
    <property type="chains" value="A/B=1-624"/>
</dbReference>
<dbReference type="PDB" id="2IOR">
    <property type="method" value="X-ray"/>
    <property type="resolution" value="1.65 A"/>
    <property type="chains" value="A=1-215"/>
</dbReference>
<dbReference type="PDBsum" id="1SF8"/>
<dbReference type="PDBsum" id="1Y4S"/>
<dbReference type="PDBsum" id="1Y4U"/>
<dbReference type="PDBsum" id="2GQ0"/>
<dbReference type="PDBsum" id="2IOP"/>
<dbReference type="PDBsum" id="2IOQ"/>
<dbReference type="PDBsum" id="2IOR"/>
<dbReference type="SMR" id="P0A6Z3"/>
<dbReference type="BioGRID" id="4261971">
    <property type="interactions" value="263"/>
</dbReference>
<dbReference type="BioGRID" id="849488">
    <property type="interactions" value="3"/>
</dbReference>
<dbReference type="DIP" id="DIP-29797N"/>
<dbReference type="FunCoup" id="P0A6Z3">
    <property type="interactions" value="767"/>
</dbReference>
<dbReference type="IntAct" id="P0A6Z3">
    <property type="interactions" value="62"/>
</dbReference>
<dbReference type="STRING" id="511145.b0473"/>
<dbReference type="CarbonylDB" id="P0A6Z3"/>
<dbReference type="jPOST" id="P0A6Z3"/>
<dbReference type="PaxDb" id="511145-b0473"/>
<dbReference type="EnsemblBacteria" id="AAC73575">
    <property type="protein sequence ID" value="AAC73575"/>
    <property type="gene ID" value="b0473"/>
</dbReference>
<dbReference type="GeneID" id="93776977"/>
<dbReference type="GeneID" id="945099"/>
<dbReference type="KEGG" id="ecj:JW0462"/>
<dbReference type="KEGG" id="eco:b0473"/>
<dbReference type="KEGG" id="ecoc:C3026_02325"/>
<dbReference type="PATRIC" id="fig|1411691.4.peg.1803"/>
<dbReference type="EchoBASE" id="EB0456"/>
<dbReference type="eggNOG" id="COG0326">
    <property type="taxonomic scope" value="Bacteria"/>
</dbReference>
<dbReference type="HOGENOM" id="CLU_006684_3_0_6"/>
<dbReference type="InParanoid" id="P0A6Z3"/>
<dbReference type="OMA" id="MRRMKEM"/>
<dbReference type="OrthoDB" id="9802640at2"/>
<dbReference type="PhylomeDB" id="P0A6Z3"/>
<dbReference type="BioCyc" id="EcoCyc:EG10461-MONOMER"/>
<dbReference type="BioCyc" id="MetaCyc:EG10461-MONOMER"/>
<dbReference type="EvolutionaryTrace" id="P0A6Z3"/>
<dbReference type="PHI-base" id="PHI:6472"/>
<dbReference type="PRO" id="PR:P0A6Z3"/>
<dbReference type="Proteomes" id="UP000000625">
    <property type="component" value="Chromosome"/>
</dbReference>
<dbReference type="GO" id="GO:0005829">
    <property type="term" value="C:cytosol"/>
    <property type="evidence" value="ECO:0000314"/>
    <property type="project" value="EcoCyc"/>
</dbReference>
<dbReference type="GO" id="GO:0005886">
    <property type="term" value="C:plasma membrane"/>
    <property type="evidence" value="ECO:0007669"/>
    <property type="project" value="UniProtKB-SubCell"/>
</dbReference>
<dbReference type="GO" id="GO:0005524">
    <property type="term" value="F:ATP binding"/>
    <property type="evidence" value="ECO:0000318"/>
    <property type="project" value="GO_Central"/>
</dbReference>
<dbReference type="GO" id="GO:0016887">
    <property type="term" value="F:ATP hydrolysis activity"/>
    <property type="evidence" value="ECO:0000314"/>
    <property type="project" value="CACAO"/>
</dbReference>
<dbReference type="GO" id="GO:0140662">
    <property type="term" value="F:ATP-dependent protein folding chaperone"/>
    <property type="evidence" value="ECO:0000314"/>
    <property type="project" value="EcoCyc"/>
</dbReference>
<dbReference type="GO" id="GO:0042802">
    <property type="term" value="F:identical protein binding"/>
    <property type="evidence" value="ECO:0000353"/>
    <property type="project" value="IntAct"/>
</dbReference>
<dbReference type="GO" id="GO:0044183">
    <property type="term" value="F:protein folding chaperone"/>
    <property type="evidence" value="ECO:0000314"/>
    <property type="project" value="EcoCyc"/>
</dbReference>
<dbReference type="GO" id="GO:0042803">
    <property type="term" value="F:protein homodimerization activity"/>
    <property type="evidence" value="ECO:0000314"/>
    <property type="project" value="EcoCyc"/>
</dbReference>
<dbReference type="GO" id="GO:0051087">
    <property type="term" value="F:protein-folding chaperone binding"/>
    <property type="evidence" value="ECO:0000353"/>
    <property type="project" value="EcoCyc"/>
</dbReference>
<dbReference type="GO" id="GO:0051082">
    <property type="term" value="F:unfolded protein binding"/>
    <property type="evidence" value="ECO:0000318"/>
    <property type="project" value="GO_Central"/>
</dbReference>
<dbReference type="GO" id="GO:0006974">
    <property type="term" value="P:DNA damage response"/>
    <property type="evidence" value="ECO:0000270"/>
    <property type="project" value="EcoliWiki"/>
</dbReference>
<dbReference type="GO" id="GO:0043093">
    <property type="term" value="P:FtsZ-dependent cytokinesis"/>
    <property type="evidence" value="ECO:0000315"/>
    <property type="project" value="EcoCyc"/>
</dbReference>
<dbReference type="GO" id="GO:0006457">
    <property type="term" value="P:protein folding"/>
    <property type="evidence" value="ECO:0000315"/>
    <property type="project" value="EcoCyc"/>
</dbReference>
<dbReference type="GO" id="GO:0009408">
    <property type="term" value="P:response to heat"/>
    <property type="evidence" value="ECO:0000270"/>
    <property type="project" value="EcoliWiki"/>
</dbReference>
<dbReference type="CDD" id="cd16927">
    <property type="entry name" value="HATPase_Hsp90-like"/>
    <property type="match status" value="1"/>
</dbReference>
<dbReference type="FunFam" id="1.20.120.790:FF:000002">
    <property type="entry name" value="Molecular chaperone HtpG"/>
    <property type="match status" value="1"/>
</dbReference>
<dbReference type="FunFam" id="3.30.230.80:FF:000002">
    <property type="entry name" value="Molecular chaperone HtpG"/>
    <property type="match status" value="1"/>
</dbReference>
<dbReference type="FunFam" id="3.30.565.10:FF:000009">
    <property type="entry name" value="Molecular chaperone HtpG"/>
    <property type="match status" value="1"/>
</dbReference>
<dbReference type="FunFam" id="3.40.50.11260:FF:000002">
    <property type="entry name" value="Molecular chaperone HtpG"/>
    <property type="match status" value="1"/>
</dbReference>
<dbReference type="Gene3D" id="3.30.230.80">
    <property type="match status" value="1"/>
</dbReference>
<dbReference type="Gene3D" id="3.40.50.11260">
    <property type="match status" value="1"/>
</dbReference>
<dbReference type="Gene3D" id="1.20.120.790">
    <property type="entry name" value="Heat shock protein 90, C-terminal domain"/>
    <property type="match status" value="1"/>
</dbReference>
<dbReference type="Gene3D" id="3.30.565.10">
    <property type="entry name" value="Histidine kinase-like ATPase, C-terminal domain"/>
    <property type="match status" value="1"/>
</dbReference>
<dbReference type="HAMAP" id="MF_00505">
    <property type="entry name" value="HSP90"/>
    <property type="match status" value="1"/>
</dbReference>
<dbReference type="InterPro" id="IPR036890">
    <property type="entry name" value="HATPase_C_sf"/>
</dbReference>
<dbReference type="InterPro" id="IPR019805">
    <property type="entry name" value="Heat_shock_protein_90_CS"/>
</dbReference>
<dbReference type="InterPro" id="IPR037196">
    <property type="entry name" value="HSP90_C"/>
</dbReference>
<dbReference type="InterPro" id="IPR001404">
    <property type="entry name" value="Hsp90_fam"/>
</dbReference>
<dbReference type="InterPro" id="IPR020575">
    <property type="entry name" value="Hsp90_N"/>
</dbReference>
<dbReference type="InterPro" id="IPR020568">
    <property type="entry name" value="Ribosomal_Su5_D2-typ_SF"/>
</dbReference>
<dbReference type="NCBIfam" id="NF003555">
    <property type="entry name" value="PRK05218.1"/>
    <property type="match status" value="1"/>
</dbReference>
<dbReference type="PANTHER" id="PTHR11528">
    <property type="entry name" value="HEAT SHOCK PROTEIN 90 FAMILY MEMBER"/>
    <property type="match status" value="1"/>
</dbReference>
<dbReference type="Pfam" id="PF13589">
    <property type="entry name" value="HATPase_c_3"/>
    <property type="match status" value="1"/>
</dbReference>
<dbReference type="Pfam" id="PF00183">
    <property type="entry name" value="HSP90"/>
    <property type="match status" value="1"/>
</dbReference>
<dbReference type="PIRSF" id="PIRSF002583">
    <property type="entry name" value="Hsp90"/>
    <property type="match status" value="1"/>
</dbReference>
<dbReference type="PRINTS" id="PR00775">
    <property type="entry name" value="HEATSHOCK90"/>
</dbReference>
<dbReference type="SMART" id="SM00387">
    <property type="entry name" value="HATPase_c"/>
    <property type="match status" value="1"/>
</dbReference>
<dbReference type="SUPFAM" id="SSF55874">
    <property type="entry name" value="ATPase domain of HSP90 chaperone/DNA topoisomerase II/histidine kinase"/>
    <property type="match status" value="1"/>
</dbReference>
<dbReference type="SUPFAM" id="SSF110942">
    <property type="entry name" value="HSP90 C-terminal domain"/>
    <property type="match status" value="1"/>
</dbReference>
<dbReference type="SUPFAM" id="SSF54211">
    <property type="entry name" value="Ribosomal protein S5 domain 2-like"/>
    <property type="match status" value="1"/>
</dbReference>
<dbReference type="PROSITE" id="PS00298">
    <property type="entry name" value="HSP90"/>
    <property type="match status" value="1"/>
</dbReference>
<proteinExistence type="evidence at protein level"/>
<sequence length="624" mass="71423">MKGQETRGFQSEVKQLLHLMIHSLYSNKEIFLRELISNASDAADKLRFRALSNPDLYEGDGELRVRVSFDKDKRTLTISDNGVGMTRDEVIDHLGTIAKSGTKSFLESLGSDQAKDSQLIGQFGVGFYSAFIVADKVTVRTRAAGEKPENGVFWESAGEGEYTVADITKEDRGTEITLHLREGEDEFLDDWRVRSIISKYSDHIALPVEIEKREEKDGETVISWEKINKAQALWTRNKSEITDEEYKEFYKHIAHDFNDPLTWSHNRVEGKQEYTSLLYIPSQAPWDMWNRDHKHGLKLYVQRVFIMDDAEQFMPNYLRFVRGLIDSSDLPLNVSREILQDSTVTRNLRNALTKRVLQMLEKLAKDDAEKYQTFWQQFGLVLKEGPAEDFANQEAIAKLLRFASTHTDSSAQTVSLEDYVSRMKEGQEKIYYITADSYAAAKSSPHLELLRKKGIEVLLLSDRIDEWMMNYLTEFDGKPFQSVSKVDESLEKLADEVDESAKEAEKALTPFIDRVKALLGERVKDVRLTHRLTDTPAIVSTDADEMSTQMAKLFAAAGQKVPEVKYIFELNPDHVLVKRAADTEDEAKFSEWVELLLDQALLAERGTLEDPNLFIRRMNQLLVS</sequence>
<keyword id="KW-0002">3D-structure</keyword>
<keyword id="KW-0067">ATP-binding</keyword>
<keyword id="KW-0997">Cell inner membrane</keyword>
<keyword id="KW-1003">Cell membrane</keyword>
<keyword id="KW-0143">Chaperone</keyword>
<keyword id="KW-0963">Cytoplasm</keyword>
<keyword id="KW-0903">Direct protein sequencing</keyword>
<keyword id="KW-0472">Membrane</keyword>
<keyword id="KW-0547">Nucleotide-binding</keyword>
<keyword id="KW-0597">Phosphoprotein</keyword>
<keyword id="KW-1185">Reference proteome</keyword>
<keyword id="KW-0346">Stress response</keyword>